<reference key="1">
    <citation type="submission" date="2004-12" db="EMBL/GenBank/DDBJ databases">
        <title>The genome sequence of Borrelia hermsii and Borrelia turicatae: comparative analysis of two agents of endemic N. America relapsing fever.</title>
        <authorList>
            <person name="Porcella S.F."/>
            <person name="Raffel S.J."/>
            <person name="Schrumpf M.E."/>
            <person name="Montgomery B."/>
            <person name="Smith T."/>
            <person name="Schwan T.G."/>
        </authorList>
    </citation>
    <scope>NUCLEOTIDE SEQUENCE [LARGE SCALE GENOMIC DNA]</scope>
    <source>
        <strain>91E135</strain>
    </source>
</reference>
<proteinExistence type="inferred from homology"/>
<gene>
    <name evidence="1" type="primary">rpoC</name>
    <name type="ordered locus">BT0388</name>
</gene>
<comment type="function">
    <text evidence="1">DNA-dependent RNA polymerase catalyzes the transcription of DNA into RNA using the four ribonucleoside triphosphates as substrates.</text>
</comment>
<comment type="catalytic activity">
    <reaction evidence="1">
        <text>RNA(n) + a ribonucleoside 5'-triphosphate = RNA(n+1) + diphosphate</text>
        <dbReference type="Rhea" id="RHEA:21248"/>
        <dbReference type="Rhea" id="RHEA-COMP:14527"/>
        <dbReference type="Rhea" id="RHEA-COMP:17342"/>
        <dbReference type="ChEBI" id="CHEBI:33019"/>
        <dbReference type="ChEBI" id="CHEBI:61557"/>
        <dbReference type="ChEBI" id="CHEBI:140395"/>
        <dbReference type="EC" id="2.7.7.6"/>
    </reaction>
</comment>
<comment type="cofactor">
    <cofactor evidence="1">
        <name>Mg(2+)</name>
        <dbReference type="ChEBI" id="CHEBI:18420"/>
    </cofactor>
    <text evidence="1">Binds 1 Mg(2+) ion per subunit.</text>
</comment>
<comment type="cofactor">
    <cofactor evidence="1">
        <name>Zn(2+)</name>
        <dbReference type="ChEBI" id="CHEBI:29105"/>
    </cofactor>
    <text evidence="1">Binds 2 Zn(2+) ions per subunit.</text>
</comment>
<comment type="subunit">
    <text evidence="1">The RNAP catalytic core consists of 2 alpha, 1 beta, 1 beta' and 1 omega subunit. When a sigma factor is associated with the core the holoenzyme is formed, which can initiate transcription.</text>
</comment>
<comment type="similarity">
    <text evidence="1">Belongs to the RNA polymerase beta' chain family.</text>
</comment>
<protein>
    <recommendedName>
        <fullName evidence="1">DNA-directed RNA polymerase subunit beta'</fullName>
        <shortName evidence="1">RNAP subunit beta'</shortName>
        <ecNumber evidence="1">2.7.7.6</ecNumber>
    </recommendedName>
    <alternativeName>
        <fullName evidence="1">RNA polymerase subunit beta'</fullName>
    </alternativeName>
    <alternativeName>
        <fullName evidence="1">Transcriptase subunit beta'</fullName>
    </alternativeName>
</protein>
<feature type="chain" id="PRO_1000165835" description="DNA-directed RNA polymerase subunit beta'">
    <location>
        <begin position="1"/>
        <end position="1377"/>
    </location>
</feature>
<feature type="binding site" evidence="1">
    <location>
        <position position="60"/>
    </location>
    <ligand>
        <name>Zn(2+)</name>
        <dbReference type="ChEBI" id="CHEBI:29105"/>
        <label>1</label>
    </ligand>
</feature>
<feature type="binding site" evidence="1">
    <location>
        <position position="62"/>
    </location>
    <ligand>
        <name>Zn(2+)</name>
        <dbReference type="ChEBI" id="CHEBI:29105"/>
        <label>1</label>
    </ligand>
</feature>
<feature type="binding site" evidence="1">
    <location>
        <position position="75"/>
    </location>
    <ligand>
        <name>Zn(2+)</name>
        <dbReference type="ChEBI" id="CHEBI:29105"/>
        <label>1</label>
    </ligand>
</feature>
<feature type="binding site" evidence="1">
    <location>
        <position position="78"/>
    </location>
    <ligand>
        <name>Zn(2+)</name>
        <dbReference type="ChEBI" id="CHEBI:29105"/>
        <label>1</label>
    </ligand>
</feature>
<feature type="binding site" evidence="1">
    <location>
        <position position="449"/>
    </location>
    <ligand>
        <name>Mg(2+)</name>
        <dbReference type="ChEBI" id="CHEBI:18420"/>
    </ligand>
</feature>
<feature type="binding site" evidence="1">
    <location>
        <position position="451"/>
    </location>
    <ligand>
        <name>Mg(2+)</name>
        <dbReference type="ChEBI" id="CHEBI:18420"/>
    </ligand>
</feature>
<feature type="binding site" evidence="1">
    <location>
        <position position="453"/>
    </location>
    <ligand>
        <name>Mg(2+)</name>
        <dbReference type="ChEBI" id="CHEBI:18420"/>
    </ligand>
</feature>
<feature type="binding site" evidence="1">
    <location>
        <position position="777"/>
    </location>
    <ligand>
        <name>Zn(2+)</name>
        <dbReference type="ChEBI" id="CHEBI:29105"/>
        <label>2</label>
    </ligand>
</feature>
<feature type="binding site" evidence="1">
    <location>
        <position position="851"/>
    </location>
    <ligand>
        <name>Zn(2+)</name>
        <dbReference type="ChEBI" id="CHEBI:29105"/>
        <label>2</label>
    </ligand>
</feature>
<feature type="binding site" evidence="1">
    <location>
        <position position="858"/>
    </location>
    <ligand>
        <name>Zn(2+)</name>
        <dbReference type="ChEBI" id="CHEBI:29105"/>
        <label>2</label>
    </ligand>
</feature>
<feature type="binding site" evidence="1">
    <location>
        <position position="861"/>
    </location>
    <ligand>
        <name>Zn(2+)</name>
        <dbReference type="ChEBI" id="CHEBI:29105"/>
        <label>2</label>
    </ligand>
</feature>
<organism>
    <name type="scientific">Borrelia turicatae (strain 91E135)</name>
    <dbReference type="NCBI Taxonomy" id="314724"/>
    <lineage>
        <taxon>Bacteria</taxon>
        <taxon>Pseudomonadati</taxon>
        <taxon>Spirochaetota</taxon>
        <taxon>Spirochaetia</taxon>
        <taxon>Spirochaetales</taxon>
        <taxon>Borreliaceae</taxon>
        <taxon>Borrelia</taxon>
    </lineage>
</organism>
<sequence length="1377" mass="154543">MKEIKDFEKIRIKIASPDQIRSWSYGEVKKSETINYRTLRPEKDGLFCERIFGTTKEWECYCGKFKSIRYKGIICDRCNVEVTHFKVRRERMGHIELSAPVAHIWYYKYIPSRIGLLLDITASNLNSILYYEKYIVIEPGDTDLKKMQLLNEDEYSEAKERYGMSFSASMGAEAIKTLLENLDLDELSSKLRLQMIDKDDKTDKKLLRRLEIIENFKVSGNKPEWMIMDVLPVIPPEIRPMVQLDGGRFATSDLNDLYRRVINRNNRLRKLLLLNAPEIIVRNEKRMLQESVDSLFDNSHKRKVVKGTSNRPLKSLSDALKGKQGRFRQNLLGKRVDYSGRSVIVVGPELKLHQCGIPAKMALELFKPFVIRKLIESESVFNIKRAKSLIEQEVDEVWQILDNVIKEHPVLLNRAPTLHRLGIQAFEPVLVEGKAIKLHPLVCHAYNADFDGDQMAVHVPLTPAAQAESWALMLSTNNLLNPANGHPIVFPSQDIVLGLYYLTMERKNVVGEGRKFSNFNHVLLAINNKSLDYNARIYVKVDGEYIETTAGCVVFNEALPGKISFVNKTLSDYELQNLISEVYVVYGSSIVIEMLDIIKELGFKYATKFGCTISMSDIIVPEEKKVYVDKANREIAKIQNDYTKGVITGEERYNNVVSVWSKTNEELTNKMMEILKKDRDGFNVIYMMADSGARGSRNQIRQLAGMRGLMAKTSGDIIELPIISNFKEGLSVIEFFISTNGARKGLADTALKTADAGYLTRRLVDIAQDVVVRIEDCGTINGIKVEALKNGEEIVEPLREKAVGSYSIERIKSPITGEIILDVNEEITEDKIKLLETVGIDKLVIRSVLTCEAEHGVCQKCYGRDFSNNKPVNIGEAVGIIAAQSIGQPGTQLTMRTFHIGGVAQAGSEDDKIALKNSFILNGLEGFNVQVDGGLLFTRKGTLRVINVIYEEDIKDIKEFKVLDSQKVIKGMPLFTSKDGIDVLSSHIGYVRIKDNKLMIVSEEQEISLKTGTKLEVNVGDYVEAGRVIGTFDPFAEPIIAEVRGKVKFKDIILGTTLKEEINLETGNIEKRITDQVFESLDPRILIINDRGIEIASYVLPGDAYLQVEDGQDIDIGDIIAKLSKGSEKTQDITGGLPRVNDLFETRIPKNLTEMAKVSGVVQFKAIQKGKRLINVLDEYGVEHKHYIPAGKHLLVRDGDVVKAGDMLCDGRINPHDVLEILGGISLQEFLLAEIQDVYRKQGVSINDKHIGVIIKQMMKKVKIVSVGDTNFVYNQKVDKHTFYEQNKRVIEQGGEPAVASPILIGITKASLNIDSFISAASFQETTKVLTDASIAGSVDDLKGLKENVVIGHLIPTGTGMNLYKRVKVRENSSSEM</sequence>
<keyword id="KW-0240">DNA-directed RNA polymerase</keyword>
<keyword id="KW-0460">Magnesium</keyword>
<keyword id="KW-0479">Metal-binding</keyword>
<keyword id="KW-0548">Nucleotidyltransferase</keyword>
<keyword id="KW-1185">Reference proteome</keyword>
<keyword id="KW-0804">Transcription</keyword>
<keyword id="KW-0808">Transferase</keyword>
<keyword id="KW-0862">Zinc</keyword>
<accession>A1QZH6</accession>
<name>RPOC_BORT9</name>
<dbReference type="EC" id="2.7.7.6" evidence="1"/>
<dbReference type="EMBL" id="CP000049">
    <property type="protein sequence ID" value="AAX17718.1"/>
    <property type="molecule type" value="Genomic_DNA"/>
</dbReference>
<dbReference type="RefSeq" id="WP_011772337.1">
    <property type="nucleotide sequence ID" value="NC_008710.1"/>
</dbReference>
<dbReference type="SMR" id="A1QZH6"/>
<dbReference type="KEGG" id="btu:BT0388"/>
<dbReference type="eggNOG" id="COG0086">
    <property type="taxonomic scope" value="Bacteria"/>
</dbReference>
<dbReference type="HOGENOM" id="CLU_000524_3_1_12"/>
<dbReference type="Proteomes" id="UP000001205">
    <property type="component" value="Chromosome"/>
</dbReference>
<dbReference type="GO" id="GO:0000428">
    <property type="term" value="C:DNA-directed RNA polymerase complex"/>
    <property type="evidence" value="ECO:0007669"/>
    <property type="project" value="UniProtKB-KW"/>
</dbReference>
<dbReference type="GO" id="GO:0003677">
    <property type="term" value="F:DNA binding"/>
    <property type="evidence" value="ECO:0007669"/>
    <property type="project" value="UniProtKB-UniRule"/>
</dbReference>
<dbReference type="GO" id="GO:0003899">
    <property type="term" value="F:DNA-directed RNA polymerase activity"/>
    <property type="evidence" value="ECO:0007669"/>
    <property type="project" value="UniProtKB-UniRule"/>
</dbReference>
<dbReference type="GO" id="GO:0000287">
    <property type="term" value="F:magnesium ion binding"/>
    <property type="evidence" value="ECO:0007669"/>
    <property type="project" value="UniProtKB-UniRule"/>
</dbReference>
<dbReference type="GO" id="GO:0008270">
    <property type="term" value="F:zinc ion binding"/>
    <property type="evidence" value="ECO:0007669"/>
    <property type="project" value="UniProtKB-UniRule"/>
</dbReference>
<dbReference type="GO" id="GO:0006351">
    <property type="term" value="P:DNA-templated transcription"/>
    <property type="evidence" value="ECO:0007669"/>
    <property type="project" value="UniProtKB-UniRule"/>
</dbReference>
<dbReference type="CDD" id="cd02655">
    <property type="entry name" value="RNAP_beta'_C"/>
    <property type="match status" value="1"/>
</dbReference>
<dbReference type="CDD" id="cd01609">
    <property type="entry name" value="RNAP_beta'_N"/>
    <property type="match status" value="1"/>
</dbReference>
<dbReference type="Gene3D" id="1.10.132.30">
    <property type="match status" value="1"/>
</dbReference>
<dbReference type="Gene3D" id="1.10.150.390">
    <property type="match status" value="1"/>
</dbReference>
<dbReference type="Gene3D" id="1.10.1790.20">
    <property type="match status" value="1"/>
</dbReference>
<dbReference type="Gene3D" id="1.10.40.90">
    <property type="match status" value="1"/>
</dbReference>
<dbReference type="Gene3D" id="2.40.40.20">
    <property type="match status" value="1"/>
</dbReference>
<dbReference type="Gene3D" id="2.40.50.100">
    <property type="match status" value="2"/>
</dbReference>
<dbReference type="Gene3D" id="4.10.860.120">
    <property type="entry name" value="RNA polymerase II, clamp domain"/>
    <property type="match status" value="1"/>
</dbReference>
<dbReference type="Gene3D" id="1.10.274.100">
    <property type="entry name" value="RNA polymerase Rpb1, domain 3"/>
    <property type="match status" value="2"/>
</dbReference>
<dbReference type="HAMAP" id="MF_01322">
    <property type="entry name" value="RNApol_bact_RpoC"/>
    <property type="match status" value="1"/>
</dbReference>
<dbReference type="InterPro" id="IPR045867">
    <property type="entry name" value="DNA-dir_RpoC_beta_prime"/>
</dbReference>
<dbReference type="InterPro" id="IPR012754">
    <property type="entry name" value="DNA-dir_RpoC_beta_prime_bact"/>
</dbReference>
<dbReference type="InterPro" id="IPR000722">
    <property type="entry name" value="RNA_pol_asu"/>
</dbReference>
<dbReference type="InterPro" id="IPR006592">
    <property type="entry name" value="RNA_pol_N"/>
</dbReference>
<dbReference type="InterPro" id="IPR007080">
    <property type="entry name" value="RNA_pol_Rpb1_1"/>
</dbReference>
<dbReference type="InterPro" id="IPR007066">
    <property type="entry name" value="RNA_pol_Rpb1_3"/>
</dbReference>
<dbReference type="InterPro" id="IPR042102">
    <property type="entry name" value="RNA_pol_Rpb1_3_sf"/>
</dbReference>
<dbReference type="InterPro" id="IPR007083">
    <property type="entry name" value="RNA_pol_Rpb1_4"/>
</dbReference>
<dbReference type="InterPro" id="IPR007081">
    <property type="entry name" value="RNA_pol_Rpb1_5"/>
</dbReference>
<dbReference type="InterPro" id="IPR044893">
    <property type="entry name" value="RNA_pol_Rpb1_clamp_domain"/>
</dbReference>
<dbReference type="InterPro" id="IPR038120">
    <property type="entry name" value="Rpb1_funnel_sf"/>
</dbReference>
<dbReference type="NCBIfam" id="TIGR02386">
    <property type="entry name" value="rpoC_TIGR"/>
    <property type="match status" value="1"/>
</dbReference>
<dbReference type="PANTHER" id="PTHR19376">
    <property type="entry name" value="DNA-DIRECTED RNA POLYMERASE"/>
    <property type="match status" value="1"/>
</dbReference>
<dbReference type="PANTHER" id="PTHR19376:SF54">
    <property type="entry name" value="DNA-DIRECTED RNA POLYMERASE SUBUNIT BETA"/>
    <property type="match status" value="1"/>
</dbReference>
<dbReference type="Pfam" id="PF04997">
    <property type="entry name" value="RNA_pol_Rpb1_1"/>
    <property type="match status" value="1"/>
</dbReference>
<dbReference type="Pfam" id="PF00623">
    <property type="entry name" value="RNA_pol_Rpb1_2"/>
    <property type="match status" value="2"/>
</dbReference>
<dbReference type="Pfam" id="PF04983">
    <property type="entry name" value="RNA_pol_Rpb1_3"/>
    <property type="match status" value="1"/>
</dbReference>
<dbReference type="Pfam" id="PF05000">
    <property type="entry name" value="RNA_pol_Rpb1_4"/>
    <property type="match status" value="1"/>
</dbReference>
<dbReference type="Pfam" id="PF04998">
    <property type="entry name" value="RNA_pol_Rpb1_5"/>
    <property type="match status" value="1"/>
</dbReference>
<dbReference type="SMART" id="SM00663">
    <property type="entry name" value="RPOLA_N"/>
    <property type="match status" value="1"/>
</dbReference>
<dbReference type="SUPFAM" id="SSF64484">
    <property type="entry name" value="beta and beta-prime subunits of DNA dependent RNA-polymerase"/>
    <property type="match status" value="1"/>
</dbReference>
<evidence type="ECO:0000255" key="1">
    <source>
        <dbReference type="HAMAP-Rule" id="MF_01322"/>
    </source>
</evidence>